<gene>
    <name evidence="1" type="primary">atpF2</name>
    <name type="ordered locus">GbCGDNIH1_1870</name>
</gene>
<reference key="1">
    <citation type="journal article" date="2007" name="J. Bacteriol.">
        <title>Genome sequence analysis of the emerging human pathogenic acetic acid bacterium Granulibacter bethesdensis.</title>
        <authorList>
            <person name="Greenberg D.E."/>
            <person name="Porcella S.F."/>
            <person name="Zelazny A.M."/>
            <person name="Virtaneva K."/>
            <person name="Sturdevant D.E."/>
            <person name="Kupko J.J. III"/>
            <person name="Barbian K.D."/>
            <person name="Babar A."/>
            <person name="Dorward D.W."/>
            <person name="Holland S.M."/>
        </authorList>
    </citation>
    <scope>NUCLEOTIDE SEQUENCE [LARGE SCALE GENOMIC DNA]</scope>
    <source>
        <strain>ATCC BAA-1260 / CGDNIH1</strain>
    </source>
</reference>
<dbReference type="EMBL" id="CP000394">
    <property type="protein sequence ID" value="ABI62768.1"/>
    <property type="molecule type" value="Genomic_DNA"/>
</dbReference>
<dbReference type="RefSeq" id="WP_011632570.1">
    <property type="nucleotide sequence ID" value="NC_008343.2"/>
</dbReference>
<dbReference type="SMR" id="Q0BQY4"/>
<dbReference type="STRING" id="391165.GbCGDNIH1_1870"/>
<dbReference type="KEGG" id="gbe:GbCGDNIH1_1870"/>
<dbReference type="eggNOG" id="COG0711">
    <property type="taxonomic scope" value="Bacteria"/>
</dbReference>
<dbReference type="HOGENOM" id="CLU_079215_6_2_5"/>
<dbReference type="OrthoDB" id="7283197at2"/>
<dbReference type="Proteomes" id="UP000001963">
    <property type="component" value="Chromosome"/>
</dbReference>
<dbReference type="GO" id="GO:0005886">
    <property type="term" value="C:plasma membrane"/>
    <property type="evidence" value="ECO:0007669"/>
    <property type="project" value="UniProtKB-SubCell"/>
</dbReference>
<dbReference type="GO" id="GO:0045259">
    <property type="term" value="C:proton-transporting ATP synthase complex"/>
    <property type="evidence" value="ECO:0007669"/>
    <property type="project" value="UniProtKB-KW"/>
</dbReference>
<dbReference type="GO" id="GO:0046933">
    <property type="term" value="F:proton-transporting ATP synthase activity, rotational mechanism"/>
    <property type="evidence" value="ECO:0007669"/>
    <property type="project" value="UniProtKB-UniRule"/>
</dbReference>
<dbReference type="GO" id="GO:0046961">
    <property type="term" value="F:proton-transporting ATPase activity, rotational mechanism"/>
    <property type="evidence" value="ECO:0007669"/>
    <property type="project" value="TreeGrafter"/>
</dbReference>
<dbReference type="CDD" id="cd06503">
    <property type="entry name" value="ATP-synt_Fo_b"/>
    <property type="match status" value="1"/>
</dbReference>
<dbReference type="HAMAP" id="MF_01398">
    <property type="entry name" value="ATP_synth_b_bprime"/>
    <property type="match status" value="1"/>
</dbReference>
<dbReference type="InterPro" id="IPR002146">
    <property type="entry name" value="ATP_synth_b/b'su_bac/chlpt"/>
</dbReference>
<dbReference type="InterPro" id="IPR050059">
    <property type="entry name" value="ATP_synthase_B_chain"/>
</dbReference>
<dbReference type="PANTHER" id="PTHR33445:SF1">
    <property type="entry name" value="ATP SYNTHASE SUBUNIT B"/>
    <property type="match status" value="1"/>
</dbReference>
<dbReference type="PANTHER" id="PTHR33445">
    <property type="entry name" value="ATP SYNTHASE SUBUNIT B', CHLOROPLASTIC"/>
    <property type="match status" value="1"/>
</dbReference>
<dbReference type="Pfam" id="PF00430">
    <property type="entry name" value="ATP-synt_B"/>
    <property type="match status" value="1"/>
</dbReference>
<accession>Q0BQY4</accession>
<name>ATPF2_GRABC</name>
<sequence>MQAHELSGAPWHHPVFWVAVAFVLFFVLFGRKIWGALTSKLDSYADEVRQNLDEARKLRREAEAMLEDARRRKEQALAEAKRLLESAHAEAARAAQALSDDAEASIRRREKMANDRIAAAEKAAVDEVRFAAADIASRAAKDILAREFGPYADAALIDSAISKLPQALRAA</sequence>
<comment type="function">
    <text evidence="1">F(1)F(0) ATP synthase produces ATP from ADP in the presence of a proton or sodium gradient. F-type ATPases consist of two structural domains, F(1) containing the extramembraneous catalytic core and F(0) containing the membrane proton channel, linked together by a central stalk and a peripheral stalk. During catalysis, ATP synthesis in the catalytic domain of F(1) is coupled via a rotary mechanism of the central stalk subunits to proton translocation.</text>
</comment>
<comment type="function">
    <text evidence="1">Component of the F(0) channel, it forms part of the peripheral stalk, linking F(1) to F(0).</text>
</comment>
<comment type="subunit">
    <text evidence="1">F-type ATPases have 2 components, F(1) - the catalytic core - and F(0) - the membrane proton channel. F(1) has five subunits: alpha(3), beta(3), gamma(1), delta(1), epsilon(1). F(0) has three main subunits: a(1), b(2) and c(10-14). The alpha and beta chains form an alternating ring which encloses part of the gamma chain. F(1) is attached to F(0) by a central stalk formed by the gamma and epsilon chains, while a peripheral stalk is formed by the delta and b chains.</text>
</comment>
<comment type="subcellular location">
    <subcellularLocation>
        <location evidence="1">Cell inner membrane</location>
        <topology evidence="1">Single-pass membrane protein</topology>
    </subcellularLocation>
</comment>
<comment type="similarity">
    <text evidence="1">Belongs to the ATPase B chain family.</text>
</comment>
<feature type="chain" id="PRO_0000368510" description="ATP synthase subunit b 2">
    <location>
        <begin position="1"/>
        <end position="171"/>
    </location>
</feature>
<feature type="transmembrane region" description="Helical" evidence="1">
    <location>
        <begin position="9"/>
        <end position="29"/>
    </location>
</feature>
<proteinExistence type="inferred from homology"/>
<protein>
    <recommendedName>
        <fullName evidence="1">ATP synthase subunit b 2</fullName>
    </recommendedName>
    <alternativeName>
        <fullName evidence="1">ATP synthase F(0) sector subunit b 2</fullName>
    </alternativeName>
    <alternativeName>
        <fullName evidence="1">ATPase subunit I 2</fullName>
    </alternativeName>
    <alternativeName>
        <fullName evidence="1">F-type ATPase subunit b 2</fullName>
        <shortName evidence="1">F-ATPase subunit b 2</shortName>
    </alternativeName>
</protein>
<keyword id="KW-0066">ATP synthesis</keyword>
<keyword id="KW-0997">Cell inner membrane</keyword>
<keyword id="KW-1003">Cell membrane</keyword>
<keyword id="KW-0138">CF(0)</keyword>
<keyword id="KW-0375">Hydrogen ion transport</keyword>
<keyword id="KW-0406">Ion transport</keyword>
<keyword id="KW-0472">Membrane</keyword>
<keyword id="KW-1185">Reference proteome</keyword>
<keyword id="KW-0812">Transmembrane</keyword>
<keyword id="KW-1133">Transmembrane helix</keyword>
<keyword id="KW-0813">Transport</keyword>
<organism>
    <name type="scientific">Granulibacter bethesdensis (strain ATCC BAA-1260 / CGDNIH1)</name>
    <dbReference type="NCBI Taxonomy" id="391165"/>
    <lineage>
        <taxon>Bacteria</taxon>
        <taxon>Pseudomonadati</taxon>
        <taxon>Pseudomonadota</taxon>
        <taxon>Alphaproteobacteria</taxon>
        <taxon>Acetobacterales</taxon>
        <taxon>Acetobacteraceae</taxon>
        <taxon>Granulibacter</taxon>
    </lineage>
</organism>
<evidence type="ECO:0000255" key="1">
    <source>
        <dbReference type="HAMAP-Rule" id="MF_01398"/>
    </source>
</evidence>